<evidence type="ECO:0000255" key="1">
    <source>
        <dbReference type="HAMAP-Rule" id="MF_00272"/>
    </source>
</evidence>
<evidence type="ECO:0000255" key="2">
    <source>
        <dbReference type="PROSITE-ProRule" id="PRU01066"/>
    </source>
</evidence>
<name>GCSH_GEOSW</name>
<dbReference type="EMBL" id="CP001638">
    <property type="protein sequence ID" value="ACS25609.1"/>
    <property type="molecule type" value="Genomic_DNA"/>
</dbReference>
<dbReference type="SMR" id="C5D7J9"/>
<dbReference type="STRING" id="471223.GWCH70_2933"/>
<dbReference type="KEGG" id="gwc:GWCH70_2933"/>
<dbReference type="eggNOG" id="COG0509">
    <property type="taxonomic scope" value="Bacteria"/>
</dbReference>
<dbReference type="HOGENOM" id="CLU_097408_2_2_9"/>
<dbReference type="OrthoDB" id="9796712at2"/>
<dbReference type="GO" id="GO:0005829">
    <property type="term" value="C:cytosol"/>
    <property type="evidence" value="ECO:0007669"/>
    <property type="project" value="TreeGrafter"/>
</dbReference>
<dbReference type="GO" id="GO:0005960">
    <property type="term" value="C:glycine cleavage complex"/>
    <property type="evidence" value="ECO:0007669"/>
    <property type="project" value="InterPro"/>
</dbReference>
<dbReference type="GO" id="GO:0019464">
    <property type="term" value="P:glycine decarboxylation via glycine cleavage system"/>
    <property type="evidence" value="ECO:0007669"/>
    <property type="project" value="UniProtKB-UniRule"/>
</dbReference>
<dbReference type="CDD" id="cd06848">
    <property type="entry name" value="GCS_H"/>
    <property type="match status" value="1"/>
</dbReference>
<dbReference type="Gene3D" id="2.40.50.100">
    <property type="match status" value="1"/>
</dbReference>
<dbReference type="HAMAP" id="MF_00272">
    <property type="entry name" value="GcvH"/>
    <property type="match status" value="1"/>
</dbReference>
<dbReference type="InterPro" id="IPR003016">
    <property type="entry name" value="2-oxoA_DH_lipoyl-BS"/>
</dbReference>
<dbReference type="InterPro" id="IPR000089">
    <property type="entry name" value="Biotin_lipoyl"/>
</dbReference>
<dbReference type="InterPro" id="IPR002930">
    <property type="entry name" value="GCV_H"/>
</dbReference>
<dbReference type="InterPro" id="IPR033753">
    <property type="entry name" value="GCV_H/Fam206"/>
</dbReference>
<dbReference type="InterPro" id="IPR017453">
    <property type="entry name" value="GCV_H_sub"/>
</dbReference>
<dbReference type="InterPro" id="IPR011053">
    <property type="entry name" value="Single_hybrid_motif"/>
</dbReference>
<dbReference type="NCBIfam" id="TIGR00527">
    <property type="entry name" value="gcvH"/>
    <property type="match status" value="1"/>
</dbReference>
<dbReference type="NCBIfam" id="NF002270">
    <property type="entry name" value="PRK01202.1"/>
    <property type="match status" value="1"/>
</dbReference>
<dbReference type="PANTHER" id="PTHR11715">
    <property type="entry name" value="GLYCINE CLEAVAGE SYSTEM H PROTEIN"/>
    <property type="match status" value="1"/>
</dbReference>
<dbReference type="PANTHER" id="PTHR11715:SF3">
    <property type="entry name" value="GLYCINE CLEAVAGE SYSTEM H PROTEIN-RELATED"/>
    <property type="match status" value="1"/>
</dbReference>
<dbReference type="Pfam" id="PF01597">
    <property type="entry name" value="GCV_H"/>
    <property type="match status" value="1"/>
</dbReference>
<dbReference type="SUPFAM" id="SSF51230">
    <property type="entry name" value="Single hybrid motif"/>
    <property type="match status" value="1"/>
</dbReference>
<dbReference type="PROSITE" id="PS50968">
    <property type="entry name" value="BIOTINYL_LIPOYL"/>
    <property type="match status" value="1"/>
</dbReference>
<dbReference type="PROSITE" id="PS00189">
    <property type="entry name" value="LIPOYL"/>
    <property type="match status" value="1"/>
</dbReference>
<sequence length="127" mass="14433">MNTPKELRYSEEHEWVRVEGDKVRIGITDFAQSELGDIVFVELPEVGAEITANEPFGSVESVKTVSELYAPISGKVVEVNEELNDNPEYVNESPYEKAWMIVVEPYDMSEIDNLLTAEQYEEMVKEG</sequence>
<accession>C5D7J9</accession>
<protein>
    <recommendedName>
        <fullName evidence="1">Glycine cleavage system H protein</fullName>
    </recommendedName>
    <alternativeName>
        <fullName evidence="1">Octanoyl/lipoyl carrier protein</fullName>
    </alternativeName>
</protein>
<gene>
    <name evidence="1" type="primary">gcvH</name>
    <name type="ordered locus">GWCH70_2933</name>
</gene>
<reference key="1">
    <citation type="submission" date="2009-06" db="EMBL/GenBank/DDBJ databases">
        <title>Complete sequence of chromosome of Geopacillus sp. WCH70.</title>
        <authorList>
            <consortium name="US DOE Joint Genome Institute"/>
            <person name="Lucas S."/>
            <person name="Copeland A."/>
            <person name="Lapidus A."/>
            <person name="Glavina del Rio T."/>
            <person name="Dalin E."/>
            <person name="Tice H."/>
            <person name="Bruce D."/>
            <person name="Goodwin L."/>
            <person name="Pitluck S."/>
            <person name="Chertkov O."/>
            <person name="Brettin T."/>
            <person name="Detter J.C."/>
            <person name="Han C."/>
            <person name="Larimer F."/>
            <person name="Land M."/>
            <person name="Hauser L."/>
            <person name="Kyrpides N."/>
            <person name="Mikhailova N."/>
            <person name="Brumm P."/>
            <person name="Mead D.A."/>
            <person name="Richardson P."/>
        </authorList>
    </citation>
    <scope>NUCLEOTIDE SEQUENCE [LARGE SCALE GENOMIC DNA]</scope>
    <source>
        <strain>WCH70</strain>
    </source>
</reference>
<keyword id="KW-0450">Lipoyl</keyword>
<feature type="chain" id="PRO_1000204747" description="Glycine cleavage system H protein">
    <location>
        <begin position="1"/>
        <end position="127"/>
    </location>
</feature>
<feature type="domain" description="Lipoyl-binding" evidence="2">
    <location>
        <begin position="22"/>
        <end position="104"/>
    </location>
</feature>
<feature type="modified residue" description="N6-lipoyllysine" evidence="1">
    <location>
        <position position="63"/>
    </location>
</feature>
<proteinExistence type="inferred from homology"/>
<organism>
    <name type="scientific">Geobacillus sp. (strain WCH70)</name>
    <dbReference type="NCBI Taxonomy" id="471223"/>
    <lineage>
        <taxon>Bacteria</taxon>
        <taxon>Bacillati</taxon>
        <taxon>Bacillota</taxon>
        <taxon>Bacilli</taxon>
        <taxon>Bacillales</taxon>
        <taxon>Anoxybacillaceae</taxon>
        <taxon>Geobacillus</taxon>
    </lineage>
</organism>
<comment type="function">
    <text evidence="1">The glycine cleavage system catalyzes the degradation of glycine. The H protein shuttles the methylamine group of glycine from the P protein to the T protein.</text>
</comment>
<comment type="function">
    <text evidence="1">Is also involved in protein lipoylation via its role as an octanoyl/lipoyl carrier protein intermediate.</text>
</comment>
<comment type="cofactor">
    <cofactor evidence="1">
        <name>(R)-lipoate</name>
        <dbReference type="ChEBI" id="CHEBI:83088"/>
    </cofactor>
    <text evidence="1">Binds 1 lipoyl cofactor covalently.</text>
</comment>
<comment type="subunit">
    <text evidence="1">The glycine cleavage system is composed of four proteins: P, T, L and H.</text>
</comment>
<comment type="similarity">
    <text evidence="1">Belongs to the GcvH family.</text>
</comment>